<dbReference type="EC" id="3.5.1.88" evidence="1"/>
<dbReference type="EMBL" id="CP000783">
    <property type="protein sequence ID" value="ABU75348.1"/>
    <property type="molecule type" value="Genomic_DNA"/>
</dbReference>
<dbReference type="RefSeq" id="WP_007871495.1">
    <property type="nucleotide sequence ID" value="NC_009778.1"/>
</dbReference>
<dbReference type="SMR" id="A7MPE9"/>
<dbReference type="KEGG" id="esa:ESA_00039"/>
<dbReference type="HOGENOM" id="CLU_061901_2_1_6"/>
<dbReference type="Proteomes" id="UP000000260">
    <property type="component" value="Chromosome"/>
</dbReference>
<dbReference type="GO" id="GO:0046872">
    <property type="term" value="F:metal ion binding"/>
    <property type="evidence" value="ECO:0007669"/>
    <property type="project" value="UniProtKB-KW"/>
</dbReference>
<dbReference type="GO" id="GO:0042586">
    <property type="term" value="F:peptide deformylase activity"/>
    <property type="evidence" value="ECO:0007669"/>
    <property type="project" value="UniProtKB-UniRule"/>
</dbReference>
<dbReference type="GO" id="GO:0043686">
    <property type="term" value="P:co-translational protein modification"/>
    <property type="evidence" value="ECO:0007669"/>
    <property type="project" value="TreeGrafter"/>
</dbReference>
<dbReference type="GO" id="GO:0006412">
    <property type="term" value="P:translation"/>
    <property type="evidence" value="ECO:0007669"/>
    <property type="project" value="UniProtKB-UniRule"/>
</dbReference>
<dbReference type="CDD" id="cd00487">
    <property type="entry name" value="Pep_deformylase"/>
    <property type="match status" value="1"/>
</dbReference>
<dbReference type="FunFam" id="3.90.45.10:FF:000001">
    <property type="entry name" value="Peptide deformylase"/>
    <property type="match status" value="1"/>
</dbReference>
<dbReference type="Gene3D" id="3.90.45.10">
    <property type="entry name" value="Peptide deformylase"/>
    <property type="match status" value="1"/>
</dbReference>
<dbReference type="HAMAP" id="MF_00163">
    <property type="entry name" value="Pep_deformylase"/>
    <property type="match status" value="1"/>
</dbReference>
<dbReference type="InterPro" id="IPR023635">
    <property type="entry name" value="Peptide_deformylase"/>
</dbReference>
<dbReference type="InterPro" id="IPR036821">
    <property type="entry name" value="Peptide_deformylase_sf"/>
</dbReference>
<dbReference type="NCBIfam" id="TIGR00079">
    <property type="entry name" value="pept_deformyl"/>
    <property type="match status" value="1"/>
</dbReference>
<dbReference type="NCBIfam" id="NF001159">
    <property type="entry name" value="PRK00150.1-3"/>
    <property type="match status" value="1"/>
</dbReference>
<dbReference type="PANTHER" id="PTHR10458">
    <property type="entry name" value="PEPTIDE DEFORMYLASE"/>
    <property type="match status" value="1"/>
</dbReference>
<dbReference type="PANTHER" id="PTHR10458:SF21">
    <property type="entry name" value="PEPTIDE DEFORMYLASE"/>
    <property type="match status" value="1"/>
</dbReference>
<dbReference type="Pfam" id="PF01327">
    <property type="entry name" value="Pep_deformylase"/>
    <property type="match status" value="1"/>
</dbReference>
<dbReference type="PIRSF" id="PIRSF004749">
    <property type="entry name" value="Pep_def"/>
    <property type="match status" value="1"/>
</dbReference>
<dbReference type="PRINTS" id="PR01576">
    <property type="entry name" value="PDEFORMYLASE"/>
</dbReference>
<dbReference type="SUPFAM" id="SSF56420">
    <property type="entry name" value="Peptide deformylase"/>
    <property type="match status" value="1"/>
</dbReference>
<gene>
    <name evidence="1" type="primary">def</name>
    <name type="ordered locus">ESA_00039</name>
</gene>
<evidence type="ECO:0000255" key="1">
    <source>
        <dbReference type="HAMAP-Rule" id="MF_00163"/>
    </source>
</evidence>
<sequence length="171" mass="19455">MSVLQVLHIPDERLRIVAEPVKEVNADIQRIVDDMFDTMYAEEGIGLAATQVDIHQRIIVIDVSENRDERLVLINPELLEQSGETGIEEGCLSIPEQRAFVPRAEKVKIRALDRDGKSFELEADGLLAICIQHEMDHLVGKLFIDYLSPMKRQRIRQKVEKLDRMKAKAAG</sequence>
<organism>
    <name type="scientific">Cronobacter sakazakii (strain ATCC BAA-894)</name>
    <name type="common">Enterobacter sakazakii</name>
    <dbReference type="NCBI Taxonomy" id="290339"/>
    <lineage>
        <taxon>Bacteria</taxon>
        <taxon>Pseudomonadati</taxon>
        <taxon>Pseudomonadota</taxon>
        <taxon>Gammaproteobacteria</taxon>
        <taxon>Enterobacterales</taxon>
        <taxon>Enterobacteriaceae</taxon>
        <taxon>Cronobacter</taxon>
    </lineage>
</organism>
<accession>A7MPE9</accession>
<comment type="function">
    <text evidence="1">Removes the formyl group from the N-terminal Met of newly synthesized proteins. Requires at least a dipeptide for an efficient rate of reaction. N-terminal L-methionine is a prerequisite for activity but the enzyme has broad specificity at other positions.</text>
</comment>
<comment type="catalytic activity">
    <reaction evidence="1">
        <text>N-terminal N-formyl-L-methionyl-[peptide] + H2O = N-terminal L-methionyl-[peptide] + formate</text>
        <dbReference type="Rhea" id="RHEA:24420"/>
        <dbReference type="Rhea" id="RHEA-COMP:10639"/>
        <dbReference type="Rhea" id="RHEA-COMP:10640"/>
        <dbReference type="ChEBI" id="CHEBI:15377"/>
        <dbReference type="ChEBI" id="CHEBI:15740"/>
        <dbReference type="ChEBI" id="CHEBI:49298"/>
        <dbReference type="ChEBI" id="CHEBI:64731"/>
        <dbReference type="EC" id="3.5.1.88"/>
    </reaction>
</comment>
<comment type="cofactor">
    <cofactor evidence="1">
        <name>Fe(2+)</name>
        <dbReference type="ChEBI" id="CHEBI:29033"/>
    </cofactor>
    <text evidence="1">Binds 1 Fe(2+) ion.</text>
</comment>
<comment type="similarity">
    <text evidence="1">Belongs to the polypeptide deformylase family.</text>
</comment>
<keyword id="KW-0378">Hydrolase</keyword>
<keyword id="KW-0408">Iron</keyword>
<keyword id="KW-0479">Metal-binding</keyword>
<keyword id="KW-0648">Protein biosynthesis</keyword>
<keyword id="KW-1185">Reference proteome</keyword>
<proteinExistence type="inferred from homology"/>
<protein>
    <recommendedName>
        <fullName evidence="1">Peptide deformylase</fullName>
        <shortName evidence="1">PDF</shortName>
        <ecNumber evidence="1">3.5.1.88</ecNumber>
    </recommendedName>
    <alternativeName>
        <fullName evidence="1">Polypeptide deformylase</fullName>
    </alternativeName>
</protein>
<reference key="1">
    <citation type="journal article" date="2010" name="PLoS ONE">
        <title>Genome sequence of Cronobacter sakazakii BAA-894 and comparative genomic hybridization analysis with other Cronobacter species.</title>
        <authorList>
            <person name="Kucerova E."/>
            <person name="Clifton S.W."/>
            <person name="Xia X.Q."/>
            <person name="Long F."/>
            <person name="Porwollik S."/>
            <person name="Fulton L."/>
            <person name="Fronick C."/>
            <person name="Minx P."/>
            <person name="Kyung K."/>
            <person name="Warren W."/>
            <person name="Fulton R."/>
            <person name="Feng D."/>
            <person name="Wollam A."/>
            <person name="Shah N."/>
            <person name="Bhonagiri V."/>
            <person name="Nash W.E."/>
            <person name="Hallsworth-Pepin K."/>
            <person name="Wilson R.K."/>
            <person name="McClelland M."/>
            <person name="Forsythe S.J."/>
        </authorList>
    </citation>
    <scope>NUCLEOTIDE SEQUENCE [LARGE SCALE GENOMIC DNA]</scope>
    <source>
        <strain>ATCC BAA-894</strain>
    </source>
</reference>
<feature type="chain" id="PRO_1000023128" description="Peptide deformylase">
    <location>
        <begin position="1"/>
        <end position="171"/>
    </location>
</feature>
<feature type="active site" evidence="1">
    <location>
        <position position="134"/>
    </location>
</feature>
<feature type="binding site" evidence="1">
    <location>
        <position position="91"/>
    </location>
    <ligand>
        <name>Fe cation</name>
        <dbReference type="ChEBI" id="CHEBI:24875"/>
    </ligand>
</feature>
<feature type="binding site" evidence="1">
    <location>
        <position position="133"/>
    </location>
    <ligand>
        <name>Fe cation</name>
        <dbReference type="ChEBI" id="CHEBI:24875"/>
    </ligand>
</feature>
<feature type="binding site" evidence="1">
    <location>
        <position position="137"/>
    </location>
    <ligand>
        <name>Fe cation</name>
        <dbReference type="ChEBI" id="CHEBI:24875"/>
    </ligand>
</feature>
<name>DEF_CROS8</name>